<reference key="1">
    <citation type="journal article" date="2002" name="Genes Genet. Syst.">
        <title>Molecular phylogeny of Japanese Leporidae, the Amami rabbit Pentalagus furnessi, the Japanese hare Lepus brachyurus, and the mountain hare Lepus timidus, inferred from mitochondrial DNA sequences.</title>
        <authorList>
            <person name="Yamada F."/>
            <person name="Takaki M."/>
            <person name="Suzuki H."/>
        </authorList>
    </citation>
    <scope>NUCLEOTIDE SEQUENCE [GENOMIC DNA]</scope>
    <source>
        <strain>Isolate Lbra_Honsyu 3</strain>
    </source>
</reference>
<proteinExistence type="inferred from homology"/>
<name>CYB_LEPBR</name>
<geneLocation type="mitochondrion"/>
<organism>
    <name type="scientific">Lepus brachyurus</name>
    <name type="common">Japanese hare</name>
    <dbReference type="NCBI Taxonomy" id="156448"/>
    <lineage>
        <taxon>Eukaryota</taxon>
        <taxon>Metazoa</taxon>
        <taxon>Chordata</taxon>
        <taxon>Craniata</taxon>
        <taxon>Vertebrata</taxon>
        <taxon>Euteleostomi</taxon>
        <taxon>Mammalia</taxon>
        <taxon>Eutheria</taxon>
        <taxon>Euarchontoglires</taxon>
        <taxon>Glires</taxon>
        <taxon>Lagomorpha</taxon>
        <taxon>Leporidae</taxon>
        <taxon>Lepus</taxon>
    </lineage>
</organism>
<dbReference type="EMBL" id="AB058616">
    <property type="protein sequence ID" value="BAB40225.2"/>
    <property type="molecule type" value="Genomic_DNA"/>
</dbReference>
<dbReference type="SMR" id="Q959V6"/>
<dbReference type="GO" id="GO:0005743">
    <property type="term" value="C:mitochondrial inner membrane"/>
    <property type="evidence" value="ECO:0007669"/>
    <property type="project" value="UniProtKB-SubCell"/>
</dbReference>
<dbReference type="GO" id="GO:0045275">
    <property type="term" value="C:respiratory chain complex III"/>
    <property type="evidence" value="ECO:0007669"/>
    <property type="project" value="InterPro"/>
</dbReference>
<dbReference type="GO" id="GO:0046872">
    <property type="term" value="F:metal ion binding"/>
    <property type="evidence" value="ECO:0007669"/>
    <property type="project" value="UniProtKB-KW"/>
</dbReference>
<dbReference type="GO" id="GO:0008121">
    <property type="term" value="F:ubiquinol-cytochrome-c reductase activity"/>
    <property type="evidence" value="ECO:0007669"/>
    <property type="project" value="InterPro"/>
</dbReference>
<dbReference type="GO" id="GO:0006122">
    <property type="term" value="P:mitochondrial electron transport, ubiquinol to cytochrome c"/>
    <property type="evidence" value="ECO:0007669"/>
    <property type="project" value="TreeGrafter"/>
</dbReference>
<dbReference type="CDD" id="cd00290">
    <property type="entry name" value="cytochrome_b_C"/>
    <property type="match status" value="1"/>
</dbReference>
<dbReference type="CDD" id="cd00284">
    <property type="entry name" value="Cytochrome_b_N"/>
    <property type="match status" value="1"/>
</dbReference>
<dbReference type="FunFam" id="1.20.810.10:FF:000002">
    <property type="entry name" value="Cytochrome b"/>
    <property type="match status" value="1"/>
</dbReference>
<dbReference type="Gene3D" id="1.20.810.10">
    <property type="entry name" value="Cytochrome Bc1 Complex, Chain C"/>
    <property type="match status" value="1"/>
</dbReference>
<dbReference type="InterPro" id="IPR005798">
    <property type="entry name" value="Cyt_b/b6_C"/>
</dbReference>
<dbReference type="InterPro" id="IPR036150">
    <property type="entry name" value="Cyt_b/b6_C_sf"/>
</dbReference>
<dbReference type="InterPro" id="IPR005797">
    <property type="entry name" value="Cyt_b/b6_N"/>
</dbReference>
<dbReference type="InterPro" id="IPR027387">
    <property type="entry name" value="Cytb/b6-like_sf"/>
</dbReference>
<dbReference type="InterPro" id="IPR030689">
    <property type="entry name" value="Cytochrome_b"/>
</dbReference>
<dbReference type="InterPro" id="IPR048260">
    <property type="entry name" value="Cytochrome_b_C_euk/bac"/>
</dbReference>
<dbReference type="InterPro" id="IPR048259">
    <property type="entry name" value="Cytochrome_b_N_euk/bac"/>
</dbReference>
<dbReference type="InterPro" id="IPR016174">
    <property type="entry name" value="Di-haem_cyt_TM"/>
</dbReference>
<dbReference type="PANTHER" id="PTHR19271">
    <property type="entry name" value="CYTOCHROME B"/>
    <property type="match status" value="1"/>
</dbReference>
<dbReference type="PANTHER" id="PTHR19271:SF16">
    <property type="entry name" value="CYTOCHROME B"/>
    <property type="match status" value="1"/>
</dbReference>
<dbReference type="Pfam" id="PF00032">
    <property type="entry name" value="Cytochrom_B_C"/>
    <property type="match status" value="1"/>
</dbReference>
<dbReference type="Pfam" id="PF00033">
    <property type="entry name" value="Cytochrome_B"/>
    <property type="match status" value="1"/>
</dbReference>
<dbReference type="PIRSF" id="PIRSF038885">
    <property type="entry name" value="COB"/>
    <property type="match status" value="1"/>
</dbReference>
<dbReference type="SUPFAM" id="SSF81648">
    <property type="entry name" value="a domain/subunit of cytochrome bc1 complex (Ubiquinol-cytochrome c reductase)"/>
    <property type="match status" value="1"/>
</dbReference>
<dbReference type="SUPFAM" id="SSF81342">
    <property type="entry name" value="Transmembrane di-heme cytochromes"/>
    <property type="match status" value="1"/>
</dbReference>
<dbReference type="PROSITE" id="PS51003">
    <property type="entry name" value="CYTB_CTER"/>
    <property type="match status" value="1"/>
</dbReference>
<dbReference type="PROSITE" id="PS51002">
    <property type="entry name" value="CYTB_NTER"/>
    <property type="match status" value="1"/>
</dbReference>
<keyword id="KW-0249">Electron transport</keyword>
<keyword id="KW-0349">Heme</keyword>
<keyword id="KW-0408">Iron</keyword>
<keyword id="KW-0472">Membrane</keyword>
<keyword id="KW-0479">Metal-binding</keyword>
<keyword id="KW-0496">Mitochondrion</keyword>
<keyword id="KW-0999">Mitochondrion inner membrane</keyword>
<keyword id="KW-0679">Respiratory chain</keyword>
<keyword id="KW-0812">Transmembrane</keyword>
<keyword id="KW-1133">Transmembrane helix</keyword>
<keyword id="KW-0813">Transport</keyword>
<keyword id="KW-0830">Ubiquinone</keyword>
<sequence length="379" mass="42641">MTNIRKTHPLLKIVNHSLIDLPAPSNISAWWNFGSLLGLCLLIQILTGLFLAMHYTSDTATAFSSVTHICRDVNYGWLIRYLHANGASMFFICLYMHVGRGIYYGSYTYLETWNIGIILLFAVMATAFMGYVLPWGQMSFWGATVITNLLSAIPYIGTTLVEWIWGGFSVDKATLTRFFAFHFILPFIIAALVMIHLLFLHETGSNNPSGIPSDSDKIPFHPYYTIKDLLGFLSLILLLLLLVLFSPDLLGDPDNYTPANPLNTPPHIKPEWYFLFAYAILRSIPNKLGGVLALVMSILILAIIPLLHMSKQRSMMFRPVSQALFWVLVADLLTLTWIGGQPVEHPFITIGQVASVLYFSIILILMPLASLIENKILKW</sequence>
<comment type="function">
    <text evidence="2">Component of the ubiquinol-cytochrome c reductase complex (complex III or cytochrome b-c1 complex) that is part of the mitochondrial respiratory chain. The b-c1 complex mediates electron transfer from ubiquinol to cytochrome c. Contributes to the generation of a proton gradient across the mitochondrial membrane that is then used for ATP synthesis.</text>
</comment>
<comment type="cofactor">
    <cofactor evidence="2">
        <name>heme b</name>
        <dbReference type="ChEBI" id="CHEBI:60344"/>
    </cofactor>
    <text evidence="2">Binds 2 heme b groups non-covalently.</text>
</comment>
<comment type="subunit">
    <text evidence="2">The cytochrome bc1 complex contains 11 subunits: 3 respiratory subunits (MT-CYB, CYC1 and UQCRFS1), 2 core proteins (UQCRC1 and UQCRC2) and 6 low-molecular weight proteins (UQCRH/QCR6, UQCRB/QCR7, UQCRQ/QCR8, UQCR10/QCR9, UQCR11/QCR10 and a cleavage product of UQCRFS1). This cytochrome bc1 complex then forms a dimer.</text>
</comment>
<comment type="subcellular location">
    <subcellularLocation>
        <location evidence="2">Mitochondrion inner membrane</location>
        <topology evidence="2">Multi-pass membrane protein</topology>
    </subcellularLocation>
</comment>
<comment type="miscellaneous">
    <text evidence="1">Heme 1 (or BL or b562) is low-potential and absorbs at about 562 nm, and heme 2 (or BH or b566) is high-potential and absorbs at about 566 nm.</text>
</comment>
<comment type="similarity">
    <text evidence="3 4">Belongs to the cytochrome b family.</text>
</comment>
<comment type="caution">
    <text evidence="2">The full-length protein contains only eight transmembrane helices, not nine as predicted by bioinformatics tools.</text>
</comment>
<feature type="chain" id="PRO_0000061099" description="Cytochrome b">
    <location>
        <begin position="1"/>
        <end position="379"/>
    </location>
</feature>
<feature type="transmembrane region" description="Helical" evidence="2">
    <location>
        <begin position="33"/>
        <end position="53"/>
    </location>
</feature>
<feature type="transmembrane region" description="Helical" evidence="2">
    <location>
        <begin position="77"/>
        <end position="98"/>
    </location>
</feature>
<feature type="transmembrane region" description="Helical" evidence="2">
    <location>
        <begin position="113"/>
        <end position="133"/>
    </location>
</feature>
<feature type="transmembrane region" description="Helical" evidence="2">
    <location>
        <begin position="178"/>
        <end position="198"/>
    </location>
</feature>
<feature type="transmembrane region" description="Helical" evidence="2">
    <location>
        <begin position="226"/>
        <end position="246"/>
    </location>
</feature>
<feature type="transmembrane region" description="Helical" evidence="2">
    <location>
        <begin position="288"/>
        <end position="308"/>
    </location>
</feature>
<feature type="transmembrane region" description="Helical" evidence="2">
    <location>
        <begin position="320"/>
        <end position="340"/>
    </location>
</feature>
<feature type="transmembrane region" description="Helical" evidence="2">
    <location>
        <begin position="347"/>
        <end position="367"/>
    </location>
</feature>
<feature type="binding site" description="axial binding residue" evidence="2">
    <location>
        <position position="83"/>
    </location>
    <ligand>
        <name>heme b</name>
        <dbReference type="ChEBI" id="CHEBI:60344"/>
        <label>b562</label>
    </ligand>
    <ligandPart>
        <name>Fe</name>
        <dbReference type="ChEBI" id="CHEBI:18248"/>
    </ligandPart>
</feature>
<feature type="binding site" description="axial binding residue" evidence="2">
    <location>
        <position position="97"/>
    </location>
    <ligand>
        <name>heme b</name>
        <dbReference type="ChEBI" id="CHEBI:60344"/>
        <label>b566</label>
    </ligand>
    <ligandPart>
        <name>Fe</name>
        <dbReference type="ChEBI" id="CHEBI:18248"/>
    </ligandPart>
</feature>
<feature type="binding site" description="axial binding residue" evidence="2">
    <location>
        <position position="182"/>
    </location>
    <ligand>
        <name>heme b</name>
        <dbReference type="ChEBI" id="CHEBI:60344"/>
        <label>b562</label>
    </ligand>
    <ligandPart>
        <name>Fe</name>
        <dbReference type="ChEBI" id="CHEBI:18248"/>
    </ligandPart>
</feature>
<feature type="binding site" description="axial binding residue" evidence="2">
    <location>
        <position position="196"/>
    </location>
    <ligand>
        <name>heme b</name>
        <dbReference type="ChEBI" id="CHEBI:60344"/>
        <label>b566</label>
    </ligand>
    <ligandPart>
        <name>Fe</name>
        <dbReference type="ChEBI" id="CHEBI:18248"/>
    </ligandPart>
</feature>
<feature type="binding site" evidence="2">
    <location>
        <position position="201"/>
    </location>
    <ligand>
        <name>a ubiquinone</name>
        <dbReference type="ChEBI" id="CHEBI:16389"/>
    </ligand>
</feature>
<evidence type="ECO:0000250" key="1"/>
<evidence type="ECO:0000250" key="2">
    <source>
        <dbReference type="UniProtKB" id="P00157"/>
    </source>
</evidence>
<evidence type="ECO:0000255" key="3">
    <source>
        <dbReference type="PROSITE-ProRule" id="PRU00967"/>
    </source>
</evidence>
<evidence type="ECO:0000255" key="4">
    <source>
        <dbReference type="PROSITE-ProRule" id="PRU00968"/>
    </source>
</evidence>
<accession>Q959V6</accession>
<protein>
    <recommendedName>
        <fullName>Cytochrome b</fullName>
    </recommendedName>
    <alternativeName>
        <fullName>Complex III subunit 3</fullName>
    </alternativeName>
    <alternativeName>
        <fullName>Complex III subunit III</fullName>
    </alternativeName>
    <alternativeName>
        <fullName>Cytochrome b-c1 complex subunit 3</fullName>
    </alternativeName>
    <alternativeName>
        <fullName>Ubiquinol-cytochrome-c reductase complex cytochrome b subunit</fullName>
    </alternativeName>
</protein>
<gene>
    <name type="primary">MT-CYB</name>
    <name type="synonym">COB</name>
    <name type="synonym">CYTB</name>
    <name type="synonym">MTCYB</name>
</gene>